<proteinExistence type="inferred from homology"/>
<reference key="1">
    <citation type="journal article" date="2002" name="Mol. Microbiol.">
        <title>Genome sequence of Streptococcus agalactiae, a pathogen causing invasive neonatal disease.</title>
        <authorList>
            <person name="Glaser P."/>
            <person name="Rusniok C."/>
            <person name="Buchrieser C."/>
            <person name="Chevalier F."/>
            <person name="Frangeul L."/>
            <person name="Msadek T."/>
            <person name="Zouine M."/>
            <person name="Couve E."/>
            <person name="Lalioui L."/>
            <person name="Poyart C."/>
            <person name="Trieu-Cuot P."/>
            <person name="Kunst F."/>
        </authorList>
    </citation>
    <scope>NUCLEOTIDE SEQUENCE [LARGE SCALE GENOMIC DNA]</scope>
    <source>
        <strain>NEM316</strain>
    </source>
</reference>
<accession>Q8E3V7</accession>
<organism>
    <name type="scientific">Streptococcus agalactiae serotype III (strain NEM316)</name>
    <dbReference type="NCBI Taxonomy" id="211110"/>
    <lineage>
        <taxon>Bacteria</taxon>
        <taxon>Bacillati</taxon>
        <taxon>Bacillota</taxon>
        <taxon>Bacilli</taxon>
        <taxon>Lactobacillales</taxon>
        <taxon>Streptococcaceae</taxon>
        <taxon>Streptococcus</taxon>
    </lineage>
</organism>
<keyword id="KW-0133">Cell shape</keyword>
<keyword id="KW-0961">Cell wall biogenesis/degradation</keyword>
<keyword id="KW-0413">Isomerase</keyword>
<keyword id="KW-0573">Peptidoglycan synthesis</keyword>
<feature type="chain" id="PRO_0000095516" description="Glutamate racemase">
    <location>
        <begin position="1"/>
        <end position="264"/>
    </location>
</feature>
<feature type="active site" description="Proton donor/acceptor" evidence="1">
    <location>
        <position position="73"/>
    </location>
</feature>
<feature type="active site" description="Proton donor/acceptor" evidence="1">
    <location>
        <position position="183"/>
    </location>
</feature>
<feature type="binding site" evidence="1">
    <location>
        <begin position="10"/>
        <end position="11"/>
    </location>
    <ligand>
        <name>substrate</name>
    </ligand>
</feature>
<feature type="binding site" evidence="1">
    <location>
        <begin position="42"/>
        <end position="43"/>
    </location>
    <ligand>
        <name>substrate</name>
    </ligand>
</feature>
<feature type="binding site" evidence="1">
    <location>
        <begin position="74"/>
        <end position="75"/>
    </location>
    <ligand>
        <name>substrate</name>
    </ligand>
</feature>
<feature type="binding site" evidence="1">
    <location>
        <begin position="184"/>
        <end position="185"/>
    </location>
    <ligand>
        <name>substrate</name>
    </ligand>
</feature>
<evidence type="ECO:0000255" key="1">
    <source>
        <dbReference type="HAMAP-Rule" id="MF_00258"/>
    </source>
</evidence>
<sequence length="264" mass="29101">MDSRPIGFLDSGVGGLTVVKEMFRQLPEEEVIFIGDQARAPYGPRPAQQIREFTWQMVNFLLTKNVKMIVIACNTATAVAWQEIKEKLDIPVLGVILPGASAAIKSTNSGKVGIIGTPMTVKSDAYRQKIQALSPNTAVVSLACPKFVPIVESNQMSSSLAKKVVYETLSPLVGKLDTLILGCTHYPLLRPIIQNVMGAEVKLIDSGAETVRDISVLLNYFEINHNWQNKHGGHHFYTTASPKGFKEIAEQWLSQEINVERIVL</sequence>
<dbReference type="EC" id="5.1.1.3" evidence="1"/>
<dbReference type="EMBL" id="AL766852">
    <property type="protein sequence ID" value="CAD47308.1"/>
    <property type="molecule type" value="Genomic_DNA"/>
</dbReference>
<dbReference type="SMR" id="Q8E3V7"/>
<dbReference type="KEGG" id="san:gbs1649"/>
<dbReference type="eggNOG" id="COG0796">
    <property type="taxonomic scope" value="Bacteria"/>
</dbReference>
<dbReference type="HOGENOM" id="CLU_052344_0_2_9"/>
<dbReference type="UniPathway" id="UPA00219"/>
<dbReference type="Proteomes" id="UP000000823">
    <property type="component" value="Chromosome"/>
</dbReference>
<dbReference type="GO" id="GO:0008881">
    <property type="term" value="F:glutamate racemase activity"/>
    <property type="evidence" value="ECO:0007669"/>
    <property type="project" value="UniProtKB-UniRule"/>
</dbReference>
<dbReference type="GO" id="GO:0071555">
    <property type="term" value="P:cell wall organization"/>
    <property type="evidence" value="ECO:0007669"/>
    <property type="project" value="UniProtKB-KW"/>
</dbReference>
<dbReference type="GO" id="GO:0009252">
    <property type="term" value="P:peptidoglycan biosynthetic process"/>
    <property type="evidence" value="ECO:0007669"/>
    <property type="project" value="UniProtKB-UniRule"/>
</dbReference>
<dbReference type="GO" id="GO:0008360">
    <property type="term" value="P:regulation of cell shape"/>
    <property type="evidence" value="ECO:0007669"/>
    <property type="project" value="UniProtKB-KW"/>
</dbReference>
<dbReference type="FunFam" id="3.40.50.1860:FF:000002">
    <property type="entry name" value="Glutamate racemase"/>
    <property type="match status" value="1"/>
</dbReference>
<dbReference type="Gene3D" id="3.40.50.1860">
    <property type="match status" value="2"/>
</dbReference>
<dbReference type="HAMAP" id="MF_00258">
    <property type="entry name" value="Glu_racemase"/>
    <property type="match status" value="1"/>
</dbReference>
<dbReference type="InterPro" id="IPR015942">
    <property type="entry name" value="Asp/Glu/hydantoin_racemase"/>
</dbReference>
<dbReference type="InterPro" id="IPR001920">
    <property type="entry name" value="Asp/Glu_race"/>
</dbReference>
<dbReference type="InterPro" id="IPR018187">
    <property type="entry name" value="Asp/Glu_racemase_AS_1"/>
</dbReference>
<dbReference type="InterPro" id="IPR033134">
    <property type="entry name" value="Asp/Glu_racemase_AS_2"/>
</dbReference>
<dbReference type="InterPro" id="IPR004391">
    <property type="entry name" value="Glu_race"/>
</dbReference>
<dbReference type="NCBIfam" id="TIGR00067">
    <property type="entry name" value="glut_race"/>
    <property type="match status" value="1"/>
</dbReference>
<dbReference type="NCBIfam" id="NF002035">
    <property type="entry name" value="PRK00865.1-3"/>
    <property type="match status" value="1"/>
</dbReference>
<dbReference type="PANTHER" id="PTHR21198">
    <property type="entry name" value="GLUTAMATE RACEMASE"/>
    <property type="match status" value="1"/>
</dbReference>
<dbReference type="PANTHER" id="PTHR21198:SF2">
    <property type="entry name" value="GLUTAMATE RACEMASE"/>
    <property type="match status" value="1"/>
</dbReference>
<dbReference type="Pfam" id="PF01177">
    <property type="entry name" value="Asp_Glu_race"/>
    <property type="match status" value="1"/>
</dbReference>
<dbReference type="SUPFAM" id="SSF53681">
    <property type="entry name" value="Aspartate/glutamate racemase"/>
    <property type="match status" value="2"/>
</dbReference>
<dbReference type="PROSITE" id="PS00923">
    <property type="entry name" value="ASP_GLU_RACEMASE_1"/>
    <property type="match status" value="1"/>
</dbReference>
<dbReference type="PROSITE" id="PS00924">
    <property type="entry name" value="ASP_GLU_RACEMASE_2"/>
    <property type="match status" value="1"/>
</dbReference>
<protein>
    <recommendedName>
        <fullName evidence="1">Glutamate racemase</fullName>
        <ecNumber evidence="1">5.1.1.3</ecNumber>
    </recommendedName>
</protein>
<name>MURI_STRA3</name>
<gene>
    <name evidence="1" type="primary">murI</name>
    <name type="ordered locus">gbs1649</name>
</gene>
<comment type="function">
    <text evidence="1">Provides the (R)-glutamate required for cell wall biosynthesis.</text>
</comment>
<comment type="catalytic activity">
    <reaction evidence="1">
        <text>L-glutamate = D-glutamate</text>
        <dbReference type="Rhea" id="RHEA:12813"/>
        <dbReference type="ChEBI" id="CHEBI:29985"/>
        <dbReference type="ChEBI" id="CHEBI:29986"/>
        <dbReference type="EC" id="5.1.1.3"/>
    </reaction>
</comment>
<comment type="pathway">
    <text evidence="1">Cell wall biogenesis; peptidoglycan biosynthesis.</text>
</comment>
<comment type="similarity">
    <text evidence="1">Belongs to the aspartate/glutamate racemases family.</text>
</comment>